<feature type="chain" id="PRO_0000255944" description="Condensin-2 complex subunit G2">
    <location>
        <begin position="1"/>
        <end position="1156"/>
    </location>
</feature>
<feature type="repeat" description="HEAT">
    <location>
        <begin position="460"/>
        <end position="498"/>
    </location>
</feature>
<feature type="region of interest" description="Disordered" evidence="2">
    <location>
        <begin position="587"/>
        <end position="611"/>
    </location>
</feature>
<feature type="compositionally biased region" description="Acidic residues" evidence="2">
    <location>
        <begin position="589"/>
        <end position="601"/>
    </location>
</feature>
<feature type="sequence conflict" description="In Ref. 1; AAH80030." evidence="4" ref="1">
    <original>H</original>
    <variation>Y</variation>
    <location>
        <position position="131"/>
    </location>
</feature>
<feature type="sequence conflict" description="In Ref. 1; AAH80030." evidence="4" ref="1">
    <original>T</original>
    <variation>A</variation>
    <location>
        <position position="193"/>
    </location>
</feature>
<gene>
    <name type="primary">ncapg2</name>
</gene>
<proteinExistence type="evidence at protein level"/>
<evidence type="ECO:0000250" key="1"/>
<evidence type="ECO:0000256" key="2">
    <source>
        <dbReference type="SAM" id="MobiDB-lite"/>
    </source>
</evidence>
<evidence type="ECO:0000269" key="3">
    <source>
    </source>
</evidence>
<evidence type="ECO:0000305" key="4"/>
<evidence type="ECO:0000305" key="5">
    <source>
    </source>
</evidence>
<accession>Q2TAW0</accession>
<accession>Q4QR24</accession>
<accession>Q68F16</accession>
<reference key="1">
    <citation type="submission" date="2005-12" db="EMBL/GenBank/DDBJ databases">
        <authorList>
            <consortium name="NIH - Xenopus Gene Collection (XGC) project"/>
        </authorList>
    </citation>
    <scope>NUCLEOTIDE SEQUENCE [LARGE SCALE MRNA]</scope>
    <source>
        <tissue>Testis</tissue>
    </source>
</reference>
<reference key="2">
    <citation type="journal article" date="2003" name="Cell">
        <title>Differential contributions of condensin I and condensin II to mitotic chromosome architecture in vertebrate cells.</title>
        <authorList>
            <person name="Ono T."/>
            <person name="Losada A."/>
            <person name="Hirano M."/>
            <person name="Myers M.P."/>
            <person name="Neuwald A.F."/>
            <person name="Hirano T."/>
        </authorList>
    </citation>
    <scope>IDENTIFICATION IN CONDENSIN-2 COMPLEX</scope>
    <scope>FUNCTION OF THE COMPLEX</scope>
</reference>
<dbReference type="EMBL" id="BC080030">
    <property type="protein sequence ID" value="AAH80030.1"/>
    <property type="molecule type" value="mRNA"/>
</dbReference>
<dbReference type="EMBL" id="BC097657">
    <property type="protein sequence ID" value="AAH97657.1"/>
    <property type="molecule type" value="mRNA"/>
</dbReference>
<dbReference type="EMBL" id="BC110705">
    <property type="protein sequence ID" value="AAI10706.1"/>
    <property type="molecule type" value="mRNA"/>
</dbReference>
<dbReference type="RefSeq" id="NP_001086462.1">
    <property type="nucleotide sequence ID" value="NM_001092993.1"/>
</dbReference>
<dbReference type="BioGRID" id="103144">
    <property type="interactions" value="3"/>
</dbReference>
<dbReference type="DIP" id="DIP-48590N"/>
<dbReference type="IntAct" id="Q2TAW0">
    <property type="interactions" value="1"/>
</dbReference>
<dbReference type="DNASU" id="446284"/>
<dbReference type="GeneID" id="446284"/>
<dbReference type="KEGG" id="xla:446284"/>
<dbReference type="AGR" id="Xenbase:XB-GENE-1002747"/>
<dbReference type="CTD" id="446284"/>
<dbReference type="Xenbase" id="XB-GENE-1002747">
    <property type="gene designation" value="ncapg2.L"/>
</dbReference>
<dbReference type="OrthoDB" id="10062843at2759"/>
<dbReference type="Proteomes" id="UP000186698">
    <property type="component" value="Chromosome 6L"/>
</dbReference>
<dbReference type="Bgee" id="446284">
    <property type="expression patterns" value="Expressed in ovary and 17 other cell types or tissues"/>
</dbReference>
<dbReference type="GO" id="GO:0000796">
    <property type="term" value="C:condensin complex"/>
    <property type="evidence" value="ECO:0000318"/>
    <property type="project" value="GO_Central"/>
</dbReference>
<dbReference type="GO" id="GO:0005634">
    <property type="term" value="C:nucleus"/>
    <property type="evidence" value="ECO:0000318"/>
    <property type="project" value="GO_Central"/>
</dbReference>
<dbReference type="GO" id="GO:0051301">
    <property type="term" value="P:cell division"/>
    <property type="evidence" value="ECO:0007669"/>
    <property type="project" value="UniProtKB-KW"/>
</dbReference>
<dbReference type="GO" id="GO:0030261">
    <property type="term" value="P:chromosome condensation"/>
    <property type="evidence" value="ECO:0007669"/>
    <property type="project" value="UniProtKB-KW"/>
</dbReference>
<dbReference type="GO" id="GO:0000070">
    <property type="term" value="P:mitotic sister chromatid segregation"/>
    <property type="evidence" value="ECO:0000318"/>
    <property type="project" value="GO_Central"/>
</dbReference>
<dbReference type="Gene3D" id="1.25.10.10">
    <property type="entry name" value="Leucine-rich Repeat Variant"/>
    <property type="match status" value="1"/>
</dbReference>
<dbReference type="InterPro" id="IPR011989">
    <property type="entry name" value="ARM-like"/>
</dbReference>
<dbReference type="InterPro" id="IPR016024">
    <property type="entry name" value="ARM-type_fold"/>
</dbReference>
<dbReference type="InterPro" id="IPR024741">
    <property type="entry name" value="Condensin2_G2"/>
</dbReference>
<dbReference type="PANTHER" id="PTHR16199">
    <property type="entry name" value="CONDENSIN-2 COMPLEX SUBUNIT G2"/>
    <property type="match status" value="1"/>
</dbReference>
<dbReference type="PANTHER" id="PTHR16199:SF4">
    <property type="entry name" value="CONDENSIN-2 COMPLEX SUBUNIT G2"/>
    <property type="match status" value="1"/>
</dbReference>
<dbReference type="Pfam" id="PF12422">
    <property type="entry name" value="Condensin2nSMC"/>
    <property type="match status" value="1"/>
</dbReference>
<dbReference type="SUPFAM" id="SSF48371">
    <property type="entry name" value="ARM repeat"/>
    <property type="match status" value="1"/>
</dbReference>
<keyword id="KW-0131">Cell cycle</keyword>
<keyword id="KW-0132">Cell division</keyword>
<keyword id="KW-0226">DNA condensation</keyword>
<keyword id="KW-0498">Mitosis</keyword>
<keyword id="KW-0539">Nucleus</keyword>
<keyword id="KW-1185">Reference proteome</keyword>
<sequence>MSKREAFLQATAKDSVEDFLSFIQLHKDVSDPFDLNELLQELSRKQKEELWEKLKTLLTEALVANPVERWQNIDDDSDDDMEVESSSDVKQTMCVIHGVTIAAAASLCVIDEDVCYETLLECAAILSGIVHALPKSESHITLAIRHLCEAWWEKGLQGKEEFGKTAFLLLLAKSLEVKCVVADIGRLWHLHQTLLSFDFNSEESHNVKDLLLQCFLSINHIKKEEGRRFLSFLFSWDVNFIKMIHGTIKNQLQCLPKSLMTHIADIYFRAWKKASGDVLQTIEQSCIQDFMHHGVHLPRNSPLHPKVREVLSYFHQQKLRQGVEEMLYNLYQPIIWRGLKARNSEVRSNAALLFVEAFPIRDPNLNHEDMDNEIQKQFEELFNLLEDPQPLVRSTGVLGVCKITAKYWEMIPPAILTDLLRKILGDLAADVSSADVRCSVFKCLPILLDNKLSHPLLENMLPALKFCLHDNSEKVRVAFVDMLLKIKAVRAAKFWKICPMEQILARLEVDSRPVSRRIVNLLFNSFFPVNQQEEVWCERCVALIQMNPAAARKFYQYAYEHTAPTNIAKLMLTIRRCLNACINRTVPNEDTEDEDDDEGDGEGIVRGDSEKENKSVLENVLSTEDSASMASLLEIVVVLWRSIRKALDQNEEAKTYTISKFASVLPEYFKAFKEERCTVPLIILASFMPPAAVPTFSCSVLSKLRHLDSGADEQKYSTLIDCLCRWGQVGHVLELASEWLSESYPEKRGRKDSNRQVRIQDTMESKPALALDYIEYIMTHTMNRDCLLSLQTKKLNQLLKVLGLVKEVLFCYIKPSEAVTHNVNQDTALRAFSLYCRLSIHLQHKFSSEGRTYLSVLEDTGGWIESQVLPTLESNQDISEEPRNMCHQILKAYLTVCKDVLMVGLADSEFQAQLLQITLSVIQTEKCHNCLPMLFYVLKEITELCLAHKMSDASVECDEMLDAIQKAFHKSLETVARRLRKQREEALQLLQTIQLPLGEFVHTVQCWHTASKVLHRGTLSTLLAAVVVEISHSLRKITDLSELTPPSSISDLPPLSKCIMTIIVKSPSAVSSFLDELTECITLEEVEGILSLTAALYVAVVSSKRKQIPPAVKNTASAIYRKLKNFCEVTMDDAGSIERAVYESSMRILNEMLHPS</sequence>
<comment type="function">
    <text evidence="3">Regulatory subunit of the condensin-2 complex, a complex which establishes mitotic chromosome architecture and is involved in physical rigidity of the chromatid axis.</text>
</comment>
<comment type="subunit">
    <text evidence="5">Component of the condensin-2 complex, which contains the smc2 and smc4 heterodimer, and three non SMC subunits that probably regulate the complex: ncaph2, ncapd3 and ncapg2.</text>
</comment>
<comment type="subcellular location">
    <subcellularLocation>
        <location evidence="1">Nucleus</location>
    </subcellularLocation>
</comment>
<name>CNDG2_XENLA</name>
<protein>
    <recommendedName>
        <fullName>Condensin-2 complex subunit G2</fullName>
    </recommendedName>
    <alternativeName>
        <fullName>Chromosome-associated protein G2</fullName>
    </alternativeName>
    <alternativeName>
        <fullName>Non-SMC condensin II complex subunit G2</fullName>
    </alternativeName>
    <alternativeName>
        <fullName>XCAP-G2</fullName>
    </alternativeName>
</protein>
<organism>
    <name type="scientific">Xenopus laevis</name>
    <name type="common">African clawed frog</name>
    <dbReference type="NCBI Taxonomy" id="8355"/>
    <lineage>
        <taxon>Eukaryota</taxon>
        <taxon>Metazoa</taxon>
        <taxon>Chordata</taxon>
        <taxon>Craniata</taxon>
        <taxon>Vertebrata</taxon>
        <taxon>Euteleostomi</taxon>
        <taxon>Amphibia</taxon>
        <taxon>Batrachia</taxon>
        <taxon>Anura</taxon>
        <taxon>Pipoidea</taxon>
        <taxon>Pipidae</taxon>
        <taxon>Xenopodinae</taxon>
        <taxon>Xenopus</taxon>
        <taxon>Xenopus</taxon>
    </lineage>
</organism>